<keyword id="KW-0040">ANK repeat</keyword>
<keyword id="KW-0225">Disease variant</keyword>
<keyword id="KW-0242">Dwarfism</keyword>
<keyword id="KW-0991">Intellectual disability</keyword>
<keyword id="KW-0539">Nucleus</keyword>
<keyword id="KW-0597">Phosphoprotein</keyword>
<keyword id="KW-1267">Proteomics identification</keyword>
<keyword id="KW-1185">Reference proteome</keyword>
<keyword id="KW-0677">Repeat</keyword>
<comment type="function">
    <text evidence="1 3 6">Chromatin regulator which modulates histone acetylation and gene expression in neural precursor cells (By similarity). May recruit histone deacetylases (HDACs) to the p160 coactivators/nuclear receptor complex to inhibit ligand-dependent transactivation (PubMed:15184363). Has a role in proliferation and development of cortical neural precursors (PubMed:25556659). May also regulate bone homeostasis (By similarity).</text>
</comment>
<comment type="subunit">
    <text evidence="3">Interacts with the PAS region of the p160 coactivators.</text>
</comment>
<comment type="subcellular location">
    <subcellularLocation>
        <location evidence="3 5 6 7">Nucleus</location>
    </subcellularLocation>
    <text evidence="5">Localizes to chromatin during prometaphase.</text>
</comment>
<comment type="developmental stage">
    <text evidence="5">Expression levels are regulated during the cell cycle, reaching maximal levels at M phase and then rapidly declining after late M phase.</text>
</comment>
<comment type="PTM">
    <text evidence="5">Subject to proteasomal degradation which is probably essential to regulate its activity.</text>
</comment>
<comment type="disease" evidence="4 5">
    <disease id="DI-03268">
        <name>KBG syndrome</name>
        <acronym>KBGS</acronym>
        <description>A syndrome characterized by macrodontia of the upper central incisors, distinctive craniofacial findings, short stature, skeletal anomalies, and neurologic involvement that includes global developmental delay, seizures, and intellectual disability.</description>
        <dbReference type="MIM" id="148050"/>
    </disease>
    <text>The disease is caused by variants affecting the gene represented in this entry.</text>
</comment>
<comment type="sequence caution" evidence="8">
    <conflict type="miscellaneous discrepancy">
        <sequence resource="EMBL-CDS" id="AAH69013"/>
    </conflict>
    <text>Contaminating sequence. Potential poly-A sequence.</text>
</comment>
<feature type="chain" id="PRO_0000066907" description="Ankyrin repeat domain-containing protein 11">
    <location>
        <begin position="1"/>
        <end position="2663"/>
    </location>
</feature>
<feature type="repeat" description="ANK 1">
    <location>
        <begin position="167"/>
        <end position="196"/>
    </location>
</feature>
<feature type="repeat" description="ANK 2">
    <location>
        <begin position="200"/>
        <end position="229"/>
    </location>
</feature>
<feature type="repeat" description="ANK 3">
    <location>
        <begin position="233"/>
        <end position="262"/>
    </location>
</feature>
<feature type="repeat" description="ANK 4">
    <location>
        <begin position="266"/>
        <end position="292"/>
    </location>
</feature>
<feature type="region of interest" description="Disordered" evidence="2">
    <location>
        <begin position="1"/>
        <end position="90"/>
    </location>
</feature>
<feature type="region of interest" description="Disordered" evidence="2">
    <location>
        <begin position="128"/>
        <end position="169"/>
    </location>
</feature>
<feature type="region of interest" description="Disordered" evidence="2">
    <location>
        <begin position="289"/>
        <end position="380"/>
    </location>
</feature>
<feature type="region of interest" description="Disordered" evidence="2">
    <location>
        <begin position="398"/>
        <end position="647"/>
    </location>
</feature>
<feature type="region of interest" description="Disordered" evidence="2">
    <location>
        <begin position="723"/>
        <end position="783"/>
    </location>
</feature>
<feature type="region of interest" description="Disordered" evidence="2">
    <location>
        <begin position="881"/>
        <end position="1043"/>
    </location>
</feature>
<feature type="region of interest" description="Disordered" evidence="2">
    <location>
        <begin position="1059"/>
        <end position="1393"/>
    </location>
</feature>
<feature type="region of interest" description="Disordered" evidence="2">
    <location>
        <begin position="1424"/>
        <end position="1710"/>
    </location>
</feature>
<feature type="region of interest" description="Disordered" evidence="2">
    <location>
        <begin position="1814"/>
        <end position="1836"/>
    </location>
</feature>
<feature type="region of interest" description="Disordered" evidence="2">
    <location>
        <begin position="1988"/>
        <end position="2019"/>
    </location>
</feature>
<feature type="region of interest" description="Disordered" evidence="2">
    <location>
        <begin position="2131"/>
        <end position="2406"/>
    </location>
</feature>
<feature type="region of interest" description="Important for protein degradation" evidence="5">
    <location>
        <begin position="2369"/>
        <end position="2663"/>
    </location>
</feature>
<feature type="compositionally biased region" description="Basic and acidic residues" evidence="2">
    <location>
        <begin position="21"/>
        <end position="54"/>
    </location>
</feature>
<feature type="compositionally biased region" description="Basic and acidic residues" evidence="2">
    <location>
        <begin position="69"/>
        <end position="90"/>
    </location>
</feature>
<feature type="compositionally biased region" description="Polar residues" evidence="2">
    <location>
        <begin position="128"/>
        <end position="155"/>
    </location>
</feature>
<feature type="compositionally biased region" description="Basic and acidic residues" evidence="2">
    <location>
        <begin position="156"/>
        <end position="169"/>
    </location>
</feature>
<feature type="compositionally biased region" description="Acidic residues" evidence="2">
    <location>
        <begin position="295"/>
        <end position="305"/>
    </location>
</feature>
<feature type="compositionally biased region" description="Polar residues" evidence="2">
    <location>
        <begin position="309"/>
        <end position="320"/>
    </location>
</feature>
<feature type="compositionally biased region" description="Basic and acidic residues" evidence="2">
    <location>
        <begin position="356"/>
        <end position="376"/>
    </location>
</feature>
<feature type="compositionally biased region" description="Basic and acidic residues" evidence="2">
    <location>
        <begin position="438"/>
        <end position="451"/>
    </location>
</feature>
<feature type="compositionally biased region" description="Basic residues" evidence="2">
    <location>
        <begin position="452"/>
        <end position="462"/>
    </location>
</feature>
<feature type="compositionally biased region" description="Basic and acidic residues" evidence="2">
    <location>
        <begin position="463"/>
        <end position="477"/>
    </location>
</feature>
<feature type="compositionally biased region" description="Acidic residues" evidence="2">
    <location>
        <begin position="481"/>
        <end position="493"/>
    </location>
</feature>
<feature type="compositionally biased region" description="Low complexity" evidence="2">
    <location>
        <begin position="513"/>
        <end position="531"/>
    </location>
</feature>
<feature type="compositionally biased region" description="Basic and acidic residues" evidence="2">
    <location>
        <begin position="539"/>
        <end position="550"/>
    </location>
</feature>
<feature type="compositionally biased region" description="Polar residues" evidence="2">
    <location>
        <begin position="551"/>
        <end position="562"/>
    </location>
</feature>
<feature type="compositionally biased region" description="Low complexity" evidence="2">
    <location>
        <begin position="576"/>
        <end position="588"/>
    </location>
</feature>
<feature type="compositionally biased region" description="Basic residues" evidence="2">
    <location>
        <begin position="591"/>
        <end position="602"/>
    </location>
</feature>
<feature type="compositionally biased region" description="Basic residues" evidence="2">
    <location>
        <begin position="629"/>
        <end position="641"/>
    </location>
</feature>
<feature type="compositionally biased region" description="Basic and acidic residues" evidence="2">
    <location>
        <begin position="881"/>
        <end position="928"/>
    </location>
</feature>
<feature type="compositionally biased region" description="Basic and acidic residues" evidence="2">
    <location>
        <begin position="935"/>
        <end position="1043"/>
    </location>
</feature>
<feature type="compositionally biased region" description="Basic and acidic residues" evidence="2">
    <location>
        <begin position="1059"/>
        <end position="1090"/>
    </location>
</feature>
<feature type="compositionally biased region" description="Basic and acidic residues" evidence="2">
    <location>
        <begin position="1099"/>
        <end position="1112"/>
    </location>
</feature>
<feature type="compositionally biased region" description="Basic and acidic residues" evidence="2">
    <location>
        <begin position="1142"/>
        <end position="1301"/>
    </location>
</feature>
<feature type="compositionally biased region" description="Basic and acidic residues" evidence="2">
    <location>
        <begin position="1330"/>
        <end position="1347"/>
    </location>
</feature>
<feature type="compositionally biased region" description="Basic and acidic residues" evidence="2">
    <location>
        <begin position="1359"/>
        <end position="1393"/>
    </location>
</feature>
<feature type="compositionally biased region" description="Basic and acidic residues" evidence="2">
    <location>
        <begin position="1424"/>
        <end position="1446"/>
    </location>
</feature>
<feature type="compositionally biased region" description="Basic and acidic residues" evidence="2">
    <location>
        <begin position="1466"/>
        <end position="1545"/>
    </location>
</feature>
<feature type="compositionally biased region" description="Basic and acidic residues" evidence="2">
    <location>
        <begin position="1556"/>
        <end position="1574"/>
    </location>
</feature>
<feature type="compositionally biased region" description="Basic and acidic residues" evidence="2">
    <location>
        <begin position="1587"/>
        <end position="1597"/>
    </location>
</feature>
<feature type="compositionally biased region" description="Basic and acidic residues" evidence="2">
    <location>
        <begin position="1605"/>
        <end position="1639"/>
    </location>
</feature>
<feature type="compositionally biased region" description="Polar residues" evidence="2">
    <location>
        <begin position="1698"/>
        <end position="1710"/>
    </location>
</feature>
<feature type="compositionally biased region" description="Low complexity" evidence="2">
    <location>
        <begin position="2310"/>
        <end position="2324"/>
    </location>
</feature>
<feature type="compositionally biased region" description="Low complexity" evidence="2">
    <location>
        <begin position="2391"/>
        <end position="2406"/>
    </location>
</feature>
<feature type="modified residue" description="Phosphoserine" evidence="10 11 12 14">
    <location>
        <position position="276"/>
    </location>
</feature>
<feature type="modified residue" description="Phosphoserine" evidence="10 11 12 13">
    <location>
        <position position="408"/>
    </location>
</feature>
<feature type="modified residue" description="Phosphothreonine" evidence="10 11 12 13">
    <location>
        <position position="410"/>
    </location>
</feature>
<feature type="modified residue" description="Phosphoserine" evidence="10 11 12 13">
    <location>
        <position position="411"/>
    </location>
</feature>
<feature type="modified residue" description="Phosphoserine" evidence="10 12 13 14">
    <location>
        <position position="834"/>
    </location>
</feature>
<feature type="modified residue" description="Phosphoserine" evidence="1">
    <location>
        <position position="1079"/>
    </location>
</feature>
<feature type="modified residue" description="Phosphothreonine" evidence="10">
    <location>
        <position position="1120"/>
    </location>
</feature>
<feature type="modified residue" description="Phosphoserine" evidence="10">
    <location>
        <position position="1123"/>
    </location>
</feature>
<feature type="modified residue" description="Phosphothreonine" evidence="10 12 14">
    <location>
        <position position="1419"/>
    </location>
</feature>
<feature type="modified residue" description="Phosphoserine" evidence="9">
    <location>
        <position position="1509"/>
    </location>
</feature>
<feature type="modified residue" description="Phosphoserine" evidence="1">
    <location>
        <position position="1692"/>
    </location>
</feature>
<feature type="modified residue" description="Phosphoserine" evidence="10 14">
    <location>
        <position position="1792"/>
    </location>
</feature>
<feature type="modified residue" description="Phosphoserine" evidence="10">
    <location>
        <position position="1847"/>
    </location>
</feature>
<feature type="modified residue" description="Phosphotyrosine" evidence="1">
    <location>
        <position position="1850"/>
    </location>
</feature>
<feature type="modified residue" description="Phosphotyrosine" evidence="1">
    <location>
        <position position="1851"/>
    </location>
</feature>
<feature type="modified residue" description="Phosphoserine" evidence="1">
    <location>
        <position position="1852"/>
    </location>
</feature>
<feature type="modified residue" description="Phosphoserine" evidence="10">
    <location>
        <position position="1859"/>
    </location>
</feature>
<feature type="modified residue" description="Phosphoserine" evidence="14">
    <location>
        <position position="1990"/>
    </location>
</feature>
<feature type="sequence variant" id="VAR_075870" description="In KBGS; uncertain significance." evidence="5">
    <original>R</original>
    <variation>Q</variation>
    <location>
        <position position="2512"/>
    </location>
</feature>
<feature type="sequence conflict" description="In Ref. 1; AAR25661." evidence="8" ref="1">
    <original>E</original>
    <variation>EE</variation>
    <location>
        <position position="76"/>
    </location>
</feature>
<feature type="sequence conflict" description="In Ref. 1; AAR25661 and 2; AAS45544." evidence="8" ref="1 2">
    <original>A</original>
    <variation>V</variation>
    <location>
        <position position="971"/>
    </location>
</feature>
<reference key="1">
    <citation type="submission" date="2003-08" db="EMBL/GenBank/DDBJ databases">
        <title>ANKRD11 and ANKRD12 are novel 9kb genes encoding nuclear-located proteins with ankyrin domains.</title>
        <authorList>
            <person name="Powell J.A."/>
            <person name="Settasatian C."/>
            <person name="Lower K."/>
            <person name="Callen D.F."/>
        </authorList>
    </citation>
    <scope>NUCLEOTIDE SEQUENCE [MRNA]</scope>
    <scope>SUBCELLULAR LOCATION</scope>
</reference>
<reference key="2">
    <citation type="journal article" date="2004" name="J. Biol. Chem.">
        <title>Identification of a novel family of ankyrin repeats-containing cofactors for p160 nuclear receptor coactivators.</title>
        <authorList>
            <person name="Zhang A."/>
            <person name="Yeung P.L."/>
            <person name="Li C.-W."/>
            <person name="Tsai S.-C."/>
            <person name="Dinh G.K."/>
            <person name="Wu X."/>
            <person name="Li H."/>
            <person name="Chen J.D."/>
        </authorList>
    </citation>
    <scope>NUCLEOTIDE SEQUENCE [MRNA]</scope>
    <scope>SUBCELLULAR LOCATION</scope>
    <scope>INTERACTION WITH P160</scope>
</reference>
<reference key="3">
    <citation type="journal article" date="2004" name="Nature">
        <title>The sequence and analysis of duplication-rich human chromosome 16.</title>
        <authorList>
            <person name="Martin J."/>
            <person name="Han C."/>
            <person name="Gordon L.A."/>
            <person name="Terry A."/>
            <person name="Prabhakar S."/>
            <person name="She X."/>
            <person name="Xie G."/>
            <person name="Hellsten U."/>
            <person name="Chan Y.M."/>
            <person name="Altherr M."/>
            <person name="Couronne O."/>
            <person name="Aerts A."/>
            <person name="Bajorek E."/>
            <person name="Black S."/>
            <person name="Blumer H."/>
            <person name="Branscomb E."/>
            <person name="Brown N.C."/>
            <person name="Bruno W.J."/>
            <person name="Buckingham J.M."/>
            <person name="Callen D.F."/>
            <person name="Campbell C.S."/>
            <person name="Campbell M.L."/>
            <person name="Campbell E.W."/>
            <person name="Caoile C."/>
            <person name="Challacombe J.F."/>
            <person name="Chasteen L.A."/>
            <person name="Chertkov O."/>
            <person name="Chi H.C."/>
            <person name="Christensen M."/>
            <person name="Clark L.M."/>
            <person name="Cohn J.D."/>
            <person name="Denys M."/>
            <person name="Detter J.C."/>
            <person name="Dickson M."/>
            <person name="Dimitrijevic-Bussod M."/>
            <person name="Escobar J."/>
            <person name="Fawcett J.J."/>
            <person name="Flowers D."/>
            <person name="Fotopulos D."/>
            <person name="Glavina T."/>
            <person name="Gomez M."/>
            <person name="Gonzales E."/>
            <person name="Goodstein D."/>
            <person name="Goodwin L.A."/>
            <person name="Grady D.L."/>
            <person name="Grigoriev I."/>
            <person name="Groza M."/>
            <person name="Hammon N."/>
            <person name="Hawkins T."/>
            <person name="Haydu L."/>
            <person name="Hildebrand C.E."/>
            <person name="Huang W."/>
            <person name="Israni S."/>
            <person name="Jett J."/>
            <person name="Jewett P.B."/>
            <person name="Kadner K."/>
            <person name="Kimball H."/>
            <person name="Kobayashi A."/>
            <person name="Krawczyk M.-C."/>
            <person name="Leyba T."/>
            <person name="Longmire J.L."/>
            <person name="Lopez F."/>
            <person name="Lou Y."/>
            <person name="Lowry S."/>
            <person name="Ludeman T."/>
            <person name="Manohar C.F."/>
            <person name="Mark G.A."/>
            <person name="McMurray K.L."/>
            <person name="Meincke L.J."/>
            <person name="Morgan J."/>
            <person name="Moyzis R.K."/>
            <person name="Mundt M.O."/>
            <person name="Munk A.C."/>
            <person name="Nandkeshwar R.D."/>
            <person name="Pitluck S."/>
            <person name="Pollard M."/>
            <person name="Predki P."/>
            <person name="Parson-Quintana B."/>
            <person name="Ramirez L."/>
            <person name="Rash S."/>
            <person name="Retterer J."/>
            <person name="Ricke D.O."/>
            <person name="Robinson D.L."/>
            <person name="Rodriguez A."/>
            <person name="Salamov A."/>
            <person name="Saunders E.H."/>
            <person name="Scott D."/>
            <person name="Shough T."/>
            <person name="Stallings R.L."/>
            <person name="Stalvey M."/>
            <person name="Sutherland R.D."/>
            <person name="Tapia R."/>
            <person name="Tesmer J.G."/>
            <person name="Thayer N."/>
            <person name="Thompson L.S."/>
            <person name="Tice H."/>
            <person name="Torney D.C."/>
            <person name="Tran-Gyamfi M."/>
            <person name="Tsai M."/>
            <person name="Ulanovsky L.E."/>
            <person name="Ustaszewska A."/>
            <person name="Vo N."/>
            <person name="White P.S."/>
            <person name="Williams A.L."/>
            <person name="Wills P.L."/>
            <person name="Wu J.-R."/>
            <person name="Wu K."/>
            <person name="Yang J."/>
            <person name="DeJong P."/>
            <person name="Bruce D."/>
            <person name="Doggett N.A."/>
            <person name="Deaven L."/>
            <person name="Schmutz J."/>
            <person name="Grimwood J."/>
            <person name="Richardson P."/>
            <person name="Rokhsar D.S."/>
            <person name="Eichler E.E."/>
            <person name="Gilna P."/>
            <person name="Lucas S.M."/>
            <person name="Myers R.M."/>
            <person name="Rubin E.M."/>
            <person name="Pennacchio L.A."/>
        </authorList>
    </citation>
    <scope>NUCLEOTIDE SEQUENCE [LARGE SCALE GENOMIC DNA]</scope>
</reference>
<reference key="4">
    <citation type="journal article" date="2004" name="Genome Res.">
        <title>The status, quality, and expansion of the NIH full-length cDNA project: the Mammalian Gene Collection (MGC).</title>
        <authorList>
            <consortium name="The MGC Project Team"/>
        </authorList>
    </citation>
    <scope>NUCLEOTIDE SEQUENCE [LARGE SCALE MRNA] OF 1-451</scope>
    <source>
        <tissue>Pancreas</tissue>
    </source>
</reference>
<reference key="5">
    <citation type="journal article" date="2006" name="Cell">
        <title>Global, in vivo, and site-specific phosphorylation dynamics in signaling networks.</title>
        <authorList>
            <person name="Olsen J.V."/>
            <person name="Blagoev B."/>
            <person name="Gnad F."/>
            <person name="Macek B."/>
            <person name="Kumar C."/>
            <person name="Mortensen P."/>
            <person name="Mann M."/>
        </authorList>
    </citation>
    <scope>PHOSPHORYLATION [LARGE SCALE ANALYSIS] AT SER-1509</scope>
    <scope>IDENTIFICATION BY MASS SPECTROMETRY [LARGE SCALE ANALYSIS]</scope>
    <source>
        <tissue>Cervix carcinoma</tissue>
    </source>
</reference>
<reference key="6">
    <citation type="journal article" date="2008" name="Proc. Natl. Acad. Sci. U.S.A.">
        <title>A quantitative atlas of mitotic phosphorylation.</title>
        <authorList>
            <person name="Dephoure N."/>
            <person name="Zhou C."/>
            <person name="Villen J."/>
            <person name="Beausoleil S.A."/>
            <person name="Bakalarski C.E."/>
            <person name="Elledge S.J."/>
            <person name="Gygi S.P."/>
        </authorList>
    </citation>
    <scope>PHOSPHORYLATION [LARGE SCALE ANALYSIS] AT SER-276; SER-408; THR-410; SER-411; SER-834; THR-1120; SER-1123; THR-1419; SER-1792; SER-1847 AND SER-1859</scope>
    <scope>IDENTIFICATION BY MASS SPECTROMETRY [LARGE SCALE ANALYSIS]</scope>
    <source>
        <tissue>Cervix carcinoma</tissue>
    </source>
</reference>
<reference key="7">
    <citation type="journal article" date="2009" name="Sci. Signal.">
        <title>Quantitative phosphoproteomic analysis of T cell receptor signaling reveals system-wide modulation of protein-protein interactions.</title>
        <authorList>
            <person name="Mayya V."/>
            <person name="Lundgren D.H."/>
            <person name="Hwang S.-I."/>
            <person name="Rezaul K."/>
            <person name="Wu L."/>
            <person name="Eng J.K."/>
            <person name="Rodionov V."/>
            <person name="Han D.K."/>
        </authorList>
    </citation>
    <scope>PHOSPHORYLATION [LARGE SCALE ANALYSIS] AT SER-276; SER-408; THR-410 AND SER-411</scope>
    <scope>IDENTIFICATION BY MASS SPECTROMETRY [LARGE SCALE ANALYSIS]</scope>
    <source>
        <tissue>Leukemic T-cell</tissue>
    </source>
</reference>
<reference key="8">
    <citation type="journal article" date="2010" name="Sci. Signal.">
        <title>Quantitative phosphoproteomics reveals widespread full phosphorylation site occupancy during mitosis.</title>
        <authorList>
            <person name="Olsen J.V."/>
            <person name="Vermeulen M."/>
            <person name="Santamaria A."/>
            <person name="Kumar C."/>
            <person name="Miller M.L."/>
            <person name="Jensen L.J."/>
            <person name="Gnad F."/>
            <person name="Cox J."/>
            <person name="Jensen T.S."/>
            <person name="Nigg E.A."/>
            <person name="Brunak S."/>
            <person name="Mann M."/>
        </authorList>
    </citation>
    <scope>PHOSPHORYLATION [LARGE SCALE ANALYSIS] AT SER-276; SER-408; THR-410; SER-411; SER-834 AND THR-1419</scope>
    <scope>IDENTIFICATION BY MASS SPECTROMETRY [LARGE SCALE ANALYSIS]</scope>
    <source>
        <tissue>Cervix carcinoma</tissue>
    </source>
</reference>
<reference key="9">
    <citation type="journal article" date="2011" name="Am. J. Hum. Genet.">
        <title>Mutations in ANKRD11 cause KBG syndrome, characterized by intellectual disability, skeletal malformations, and macrodontia.</title>
        <authorList>
            <person name="Sirmaci A."/>
            <person name="Spiliopoulos M."/>
            <person name="Brancati F."/>
            <person name="Powell E."/>
            <person name="Duman D."/>
            <person name="Abrams A."/>
            <person name="Bademci G."/>
            <person name="Agolini E."/>
            <person name="Guo S."/>
            <person name="Konuk B."/>
            <person name="Kavaz A."/>
            <person name="Blanton S."/>
            <person name="Digilio M.C."/>
            <person name="Dallapiccola B."/>
            <person name="Young J."/>
            <person name="Zuchner S."/>
            <person name="Tekin M."/>
        </authorList>
    </citation>
    <scope>INVOLVEMENT IN KBGS</scope>
</reference>
<reference key="10">
    <citation type="journal article" date="2011" name="Sci. Signal.">
        <title>System-wide temporal characterization of the proteome and phosphoproteome of human embryonic stem cell differentiation.</title>
        <authorList>
            <person name="Rigbolt K.T."/>
            <person name="Prokhorova T.A."/>
            <person name="Akimov V."/>
            <person name="Henningsen J."/>
            <person name="Johansen P.T."/>
            <person name="Kratchmarova I."/>
            <person name="Kassem M."/>
            <person name="Mann M."/>
            <person name="Olsen J.V."/>
            <person name="Blagoev B."/>
        </authorList>
    </citation>
    <scope>PHOSPHORYLATION [LARGE SCALE ANALYSIS] AT SER-408; THR-410; SER-411 AND SER-834</scope>
    <scope>IDENTIFICATION BY MASS SPECTROMETRY [LARGE SCALE ANALYSIS]</scope>
</reference>
<reference key="11">
    <citation type="journal article" date="2013" name="J. Proteome Res.">
        <title>Toward a comprehensive characterization of a human cancer cell phosphoproteome.</title>
        <authorList>
            <person name="Zhou H."/>
            <person name="Di Palma S."/>
            <person name="Preisinger C."/>
            <person name="Peng M."/>
            <person name="Polat A.N."/>
            <person name="Heck A.J."/>
            <person name="Mohammed S."/>
        </authorList>
    </citation>
    <scope>PHOSPHORYLATION [LARGE SCALE ANALYSIS] AT SER-276; SER-834; THR-1419; SER-1792 AND SER-1990</scope>
    <scope>IDENTIFICATION BY MASS SPECTROMETRY [LARGE SCALE ANALYSIS]</scope>
    <source>
        <tissue>Cervix carcinoma</tissue>
        <tissue>Erythroleukemia</tissue>
    </source>
</reference>
<reference key="12">
    <citation type="journal article" date="2015" name="Dev. Cell">
        <title>Ankrd11 is a chromatin regulator involved in autism that is essential for neural development.</title>
        <authorList>
            <person name="Gallagher D."/>
            <person name="Voronova A."/>
            <person name="Zander M.A."/>
            <person name="Cancino G.I."/>
            <person name="Bramall A."/>
            <person name="Krause M.P."/>
            <person name="Abad C."/>
            <person name="Tekin M."/>
            <person name="Neilsen P.M."/>
            <person name="Callen D.F."/>
            <person name="Scherer S.W."/>
            <person name="Keller G.M."/>
            <person name="Kaplan D.R."/>
            <person name="Walz K."/>
            <person name="Miller F.D."/>
        </authorList>
    </citation>
    <scope>FUNCTION</scope>
    <scope>SUBCELLULAR LOCATION</scope>
</reference>
<reference key="13">
    <citation type="journal article" date="2015" name="Hum. Genet.">
        <title>Characterization of ANKRD11 mutations in humans and mice related to KBG syndrome.</title>
        <authorList>
            <person name="Walz K."/>
            <person name="Cohen D."/>
            <person name="Neilsen P.M."/>
            <person name="Foster J. II"/>
            <person name="Brancati F."/>
            <person name="Demir K."/>
            <person name="Fisher R."/>
            <person name="Moffat M."/>
            <person name="Verbeek N.E."/>
            <person name="Bjoergo K."/>
            <person name="Lo Castro A."/>
            <person name="Curatolo P."/>
            <person name="Novelli G."/>
            <person name="Abad C."/>
            <person name="Lei C."/>
            <person name="Zhang L."/>
            <person name="Diaz-Horta O."/>
            <person name="Young J.I."/>
            <person name="Callen D.F."/>
            <person name="Tekin M."/>
        </authorList>
    </citation>
    <scope>SUBCELLULAR LOCATION</scope>
    <scope>DEVELOPMENTAL STAGE</scope>
    <scope>PROTEASOMAL DEGRADATION</scope>
    <scope>VARIANT KBGS GLN-2512</scope>
</reference>
<proteinExistence type="evidence at protein level"/>
<protein>
    <recommendedName>
        <fullName>Ankyrin repeat domain-containing protein 11</fullName>
    </recommendedName>
    <alternativeName>
        <fullName>Ankyrin repeat-containing cofactor 1</fullName>
    </alternativeName>
</protein>
<gene>
    <name type="primary">ANKRD11</name>
    <name type="synonym">ANCO1</name>
</gene>
<organism>
    <name type="scientific">Homo sapiens</name>
    <name type="common">Human</name>
    <dbReference type="NCBI Taxonomy" id="9606"/>
    <lineage>
        <taxon>Eukaryota</taxon>
        <taxon>Metazoa</taxon>
        <taxon>Chordata</taxon>
        <taxon>Craniata</taxon>
        <taxon>Vertebrata</taxon>
        <taxon>Euteleostomi</taxon>
        <taxon>Mammalia</taxon>
        <taxon>Eutheria</taxon>
        <taxon>Euarchontoglires</taxon>
        <taxon>Primates</taxon>
        <taxon>Haplorrhini</taxon>
        <taxon>Catarrhini</taxon>
        <taxon>Hominidae</taxon>
        <taxon>Homo</taxon>
    </lineage>
</organism>
<accession>Q6UB99</accession>
<accession>Q6NTG1</accession>
<accession>Q6QMF8</accession>
<sequence length="2663" mass="297913">MPKGGCPKAPQQEELPLSSDMVEKQTGKKDKDKVSLTKTPKLERGDGGKEVRERASKRKLPFTAGANGEQKDSDTEKQGPERKRIKKEPVTRKAGLLFGMGLSGIRAGYPLSERQQVALLMQMTAEESANSPVDTTPKHPSQSTVCQKGTPNSASKTKDKVNKRNERGETRLHRAAIRGDARRIKELISEGADVNVKDFAGWTALHEACNRGYYDVAKQLLAAGAEVNTKGLDDDTPLHDAANNGHYKVVKLLLRYGGNPQQSNRKGETPLKVANSPTMVNLLLGKGTYTSSEESSTESSEEEDAPSFAPSSSVDGNNTDSEFEKGLKHKAKNPEPQKATAPVKDEYEFDEDDEQDRVPPVDDKHLLKKDYRKETKSNSFISIPKMEVKSYTKNNTIAPKKASHRILSDTSDEEDASVTVGTGEKLRLSAHTILPGSKTREPSNAKQQKEKNKVKKKRKKETKGREVRFGKRSDKFCSSESESESSESGEDDRDSLGSSGCLKGSPLVLKDPSLFSSLSASSTSSHGSSAAQKQNPSHTDQHTKHWRTDNWKTISSPAWSEVSSLSDSTRTRLTSESDYSSEGSSVESLKPVRKRQEHRKRASLSEKKSPFLSSAEGAVPKLDKEGKVVKKHKTKHKHKNKEKGQCSISQELKLKSFTYEYEDSKQKSDKAILLENDLSTENKLKVLKHDRDHFKKEEKLSKMKLEEKEWLFKDEKSLKRIKDTNKDISRSFREEKDRSNKAEKERSLKEKSPKEEKLRLYKEERKKKSKDRPSKLEKKNDLKEDKISKEKEKIFKEDKEKLKKEKVYREDSAFDEYCNKNQFLENEDTKFSLSDDQRDRWFSDLSDSSFDFKGEDSWDSPVTDYRDMKSDSVAKLILETVKEDSKERRRDSRAREKRDYREPFFRKKDRDYLDKNSEKRKEQTEKHKSVPGYLSEKDKKRRESAEAGRDRKDALESCKERRDGRAKPEEAHREELKECGCESGFKDKSDGDFGKGLEPWERHHPAREKEKKDGPDKERKEKTKPERYKEKSSDKDKSEKSILEKCQKDKEFDKCFKEKKDTKEKHKDTHGKDKERKASLDQGKEKKEKAFPGIISEDFSEKKDDKKGKEKSWYIADIFTDESEDDRDSCMGSGFKMGEASDLPRTDGLQEKEEGREAYASDRHRKSSDKQHPERQKDKEPRDRRKDRGAADAGRDKKEKVFEKHKEKKDKESTEKYKDRKDRASVDSTQDKKNKQKLPEKAEKKHAAEDKAKSKHKEKSDKEHSKERKSSRSADAEKSLLEKLEEEALHEYREDSNDKISEVSSDSFTDRGQEPGLTAFLEVSFTEPPGDDKPRESACLPEKLKEKERHRHSSSSSKKSHDRERAKKEKAEKKEKGEDYKEGGSRKDSGQYEKDFLEADAYGVSYNMKADIEDELDKTIELFSTEKKDKNDSEREPSKKIEKELKPYGSSAINILKEKKKREKHREKWRDEKERHRDRHADGLLRHHRDELLRHHRDEQKPATRDKDSPPRVLKDKSRDEGPRLGDAKLKEKFKDGAEKEKGDPVKMSNGNDKVAPSKDPGKKDARPREKLLGDGDLMMTSFERMLSQKDLEIEERHKRHKERMKQMEKLRHRSGDPKLKEKAKPADDGRKKGLDIPAKKPPGLDPPFKDKKLKESTPIPPAAENKLHPASGADSKDWLAGPHMKEVLPASPRPDQSRPTGVPTPTSVLSCPSYEEVMHTPRTPSCSADDYADLVFDCADSQHSTPVPTAPTSACSPSFFDRFSVASSGLSENASQAPARPLSTNLYRSVSVDIRRTPEEEFSVGDKLFRQQSVPAASSYDSPMPPSMEDRAPLPPVPAEKFACLSPGYYSPDYGLPSPKVDALHCPPAAVVTVTPSPEGVFSSLQAKPSPSPRAELLVPSLEGALPPDLDTSEDQQATAAIIPPEPSYLEPLDEGPFSAVITEEPVEWAHPSEQALASSLIGGTSENPVSWPVGSDLLLKSPQRFPESPKRFCPADPLHSAAPGPFSASEAPYPAPPASPAPYALPVAEPGLEDVKDGVDAVPAAISTSEAAPYAPPSGLESFFSNCKSLPEAPLDVAPEPACVAAVAQVEALGPLENSFLDGSRGLSHLGQVEPVPWADAFAGPEDDLDLGPFSLPELPLQTKDAADGEAEPVEESLAPPEEMPPGAPGVINGGDVSTVVAEEPPALPPDQASTRLPAELEPEPSGEPKLDVALEAAVEAETVPEERARGDPDSSVEPAPVPPEQRPLGSGDQGAEAEGPPAASLCAPDGPAPNTVAQAQAADGAGPEDDTEASRAAAPAEGPPGGIQPEAAEPKPTAEAPKAPRVEEIPQRMTRNRAQMLANQSKQGPPPSEKECAPTPAPVTRAKARGSEDDDAQAQHPRKRRFQRSTQQLQQQLNTSTQQTREVIQQTLAAIVDAIKLDAIEPYHSDRANPYFEYLQIRKKIEEKRKILCCITPQAPQCYAEYVTYTGSYLLDGKPLSKLHIPVIAPPPSLAEPLKELFRQQEAVRGKLRLQHSIEREKLIVSCEQEILRVHCRAARTIANQAVPFSACTMLLDSEVYNMPLESQGDENKSVRDRFNARQFISWLQDVDDKYDRMKTCLLMRQQHEAAALNAVQRMEWQLKVQELDPAGHKSLCVNEVPSFYVPMVDVNDDFVLLPA</sequence>
<dbReference type="EMBL" id="AY373756">
    <property type="protein sequence ID" value="AAR25661.1"/>
    <property type="molecule type" value="mRNA"/>
</dbReference>
<dbReference type="EMBL" id="AY533563">
    <property type="protein sequence ID" value="AAS45544.1"/>
    <property type="molecule type" value="mRNA"/>
</dbReference>
<dbReference type="EMBL" id="AC137932">
    <property type="status" value="NOT_ANNOTATED_CDS"/>
    <property type="molecule type" value="Genomic_DNA"/>
</dbReference>
<dbReference type="EMBL" id="BC069013">
    <property type="protein sequence ID" value="AAH69013.1"/>
    <property type="status" value="ALT_SEQ"/>
    <property type="molecule type" value="mRNA"/>
</dbReference>
<dbReference type="CCDS" id="CCDS32513.1"/>
<dbReference type="RefSeq" id="NP_001243111.1">
    <property type="nucleotide sequence ID" value="NM_001256182.2"/>
</dbReference>
<dbReference type="RefSeq" id="NP_001243112.1">
    <property type="nucleotide sequence ID" value="NM_001256183.2"/>
</dbReference>
<dbReference type="RefSeq" id="NP_037407.4">
    <property type="nucleotide sequence ID" value="NM_013275.5"/>
</dbReference>
<dbReference type="RefSeq" id="XP_011521353.1">
    <property type="nucleotide sequence ID" value="XM_011523051.2"/>
</dbReference>
<dbReference type="RefSeq" id="XP_011521355.1">
    <property type="nucleotide sequence ID" value="XM_011523053.2"/>
</dbReference>
<dbReference type="RefSeq" id="XP_016878671.1">
    <property type="nucleotide sequence ID" value="XM_017023182.1"/>
</dbReference>
<dbReference type="RefSeq" id="XP_016878672.1">
    <property type="nucleotide sequence ID" value="XM_017023183.1"/>
</dbReference>
<dbReference type="RefSeq" id="XP_016878673.1">
    <property type="nucleotide sequence ID" value="XM_017023184.1"/>
</dbReference>
<dbReference type="RefSeq" id="XP_016878674.1">
    <property type="nucleotide sequence ID" value="XM_017023185.1"/>
</dbReference>
<dbReference type="RefSeq" id="XP_016878675.1">
    <property type="nucleotide sequence ID" value="XM_017023186.1"/>
</dbReference>
<dbReference type="RefSeq" id="XP_016878676.1">
    <property type="nucleotide sequence ID" value="XM_017023187.1"/>
</dbReference>
<dbReference type="SMR" id="Q6UB99"/>
<dbReference type="BioGRID" id="118888">
    <property type="interactions" value="163"/>
</dbReference>
<dbReference type="CORUM" id="Q6UB99"/>
<dbReference type="FunCoup" id="Q6UB99">
    <property type="interactions" value="3781"/>
</dbReference>
<dbReference type="IntAct" id="Q6UB99">
    <property type="interactions" value="33"/>
</dbReference>
<dbReference type="STRING" id="9606.ENSP00000301030"/>
<dbReference type="CarbonylDB" id="Q6UB99"/>
<dbReference type="GlyCosmos" id="Q6UB99">
    <property type="glycosylation" value="1 site, 1 glycan"/>
</dbReference>
<dbReference type="GlyGen" id="Q6UB99">
    <property type="glycosylation" value="8 sites, 1 O-linked glycan (6 sites)"/>
</dbReference>
<dbReference type="iPTMnet" id="Q6UB99"/>
<dbReference type="PhosphoSitePlus" id="Q6UB99"/>
<dbReference type="BioMuta" id="ANKRD11"/>
<dbReference type="DMDM" id="296439440"/>
<dbReference type="jPOST" id="Q6UB99"/>
<dbReference type="MassIVE" id="Q6UB99"/>
<dbReference type="PaxDb" id="9606-ENSP00000301030"/>
<dbReference type="PeptideAtlas" id="Q6UB99"/>
<dbReference type="ProteomicsDB" id="67406"/>
<dbReference type="Pumba" id="Q6UB99"/>
<dbReference type="Antibodypedia" id="4516">
    <property type="antibodies" value="127 antibodies from 22 providers"/>
</dbReference>
<dbReference type="DNASU" id="29123"/>
<dbReference type="Ensembl" id="ENST00000301030.10">
    <property type="protein sequence ID" value="ENSP00000301030.4"/>
    <property type="gene ID" value="ENSG00000167522.18"/>
</dbReference>
<dbReference type="Ensembl" id="ENST00000378330.7">
    <property type="protein sequence ID" value="ENSP00000367581.2"/>
    <property type="gene ID" value="ENSG00000167522.18"/>
</dbReference>
<dbReference type="Ensembl" id="ENST00000642600.2">
    <property type="protein sequence ID" value="ENSP00000495226.1"/>
    <property type="gene ID" value="ENSG00000167522.18"/>
</dbReference>
<dbReference type="GeneID" id="29123"/>
<dbReference type="KEGG" id="hsa:29123"/>
<dbReference type="MANE-Select" id="ENST00000301030.10">
    <property type="protein sequence ID" value="ENSP00000301030.4"/>
    <property type="RefSeq nucleotide sequence ID" value="NM_013275.6"/>
    <property type="RefSeq protein sequence ID" value="NP_037407.4"/>
</dbReference>
<dbReference type="UCSC" id="uc002fmx.3">
    <property type="organism name" value="human"/>
</dbReference>
<dbReference type="AGR" id="HGNC:21316"/>
<dbReference type="CTD" id="29123"/>
<dbReference type="DisGeNET" id="29123"/>
<dbReference type="GeneCards" id="ANKRD11"/>
<dbReference type="GeneReviews" id="ANKRD11"/>
<dbReference type="HGNC" id="HGNC:21316">
    <property type="gene designation" value="ANKRD11"/>
</dbReference>
<dbReference type="HPA" id="ENSG00000167522">
    <property type="expression patterns" value="Low tissue specificity"/>
</dbReference>
<dbReference type="MalaCards" id="ANKRD11"/>
<dbReference type="MIM" id="148050">
    <property type="type" value="phenotype"/>
</dbReference>
<dbReference type="MIM" id="611192">
    <property type="type" value="gene"/>
</dbReference>
<dbReference type="neXtProt" id="NX_Q6UB99"/>
<dbReference type="OpenTargets" id="ENSG00000167522"/>
<dbReference type="Orphanet" id="261250">
    <property type="disease" value="16q24.3 microdeletion syndrome"/>
</dbReference>
<dbReference type="Orphanet" id="2332">
    <property type="disease" value="KBG syndrome"/>
</dbReference>
<dbReference type="PharmGKB" id="PA134861925"/>
<dbReference type="VEuPathDB" id="HostDB:ENSG00000167522"/>
<dbReference type="eggNOG" id="ENOG502QQG5">
    <property type="taxonomic scope" value="Eukaryota"/>
</dbReference>
<dbReference type="GeneTree" id="ENSGT00940000155966"/>
<dbReference type="HOGENOM" id="CLU_229338_0_0_1"/>
<dbReference type="InParanoid" id="Q6UB99"/>
<dbReference type="OMA" id="ADQHSKH"/>
<dbReference type="OrthoDB" id="5806726at2759"/>
<dbReference type="PAN-GO" id="Q6UB99">
    <property type="GO annotations" value="2 GO annotations based on evolutionary models"/>
</dbReference>
<dbReference type="PhylomeDB" id="Q6UB99"/>
<dbReference type="TreeFam" id="TF326440"/>
<dbReference type="PathwayCommons" id="Q6UB99"/>
<dbReference type="SignaLink" id="Q6UB99"/>
<dbReference type="SIGNOR" id="Q6UB99"/>
<dbReference type="BioGRID-ORCS" id="29123">
    <property type="hits" value="247 hits in 1168 CRISPR screens"/>
</dbReference>
<dbReference type="ChiTaRS" id="ANKRD11">
    <property type="organism name" value="human"/>
</dbReference>
<dbReference type="GenomeRNAi" id="29123"/>
<dbReference type="Pharos" id="Q6UB99">
    <property type="development level" value="Tbio"/>
</dbReference>
<dbReference type="PRO" id="PR:Q6UB99"/>
<dbReference type="Proteomes" id="UP000005640">
    <property type="component" value="Chromosome 16"/>
</dbReference>
<dbReference type="RNAct" id="Q6UB99">
    <property type="molecule type" value="protein"/>
</dbReference>
<dbReference type="Bgee" id="ENSG00000167522">
    <property type="expression patterns" value="Expressed in tendon of biceps brachii and 189 other cell types or tissues"/>
</dbReference>
<dbReference type="ExpressionAtlas" id="Q6UB99">
    <property type="expression patterns" value="baseline and differential"/>
</dbReference>
<dbReference type="GO" id="GO:0005829">
    <property type="term" value="C:cytosol"/>
    <property type="evidence" value="ECO:0000314"/>
    <property type="project" value="HPA"/>
</dbReference>
<dbReference type="GO" id="GO:0005654">
    <property type="term" value="C:nucleoplasm"/>
    <property type="evidence" value="ECO:0000314"/>
    <property type="project" value="HPA"/>
</dbReference>
<dbReference type="GO" id="GO:0005634">
    <property type="term" value="C:nucleus"/>
    <property type="evidence" value="ECO:0000314"/>
    <property type="project" value="MGI"/>
</dbReference>
<dbReference type="GO" id="GO:0060325">
    <property type="term" value="P:face morphogenesis"/>
    <property type="evidence" value="ECO:0000315"/>
    <property type="project" value="MGI"/>
</dbReference>
<dbReference type="GO" id="GO:0042475">
    <property type="term" value="P:odontogenesis of dentin-containing tooth"/>
    <property type="evidence" value="ECO:0000315"/>
    <property type="project" value="MGI"/>
</dbReference>
<dbReference type="GO" id="GO:0048705">
    <property type="term" value="P:skeletal system morphogenesis"/>
    <property type="evidence" value="ECO:0000315"/>
    <property type="project" value="MGI"/>
</dbReference>
<dbReference type="FunFam" id="1.25.40.20:FF:000039">
    <property type="entry name" value="Ankyrin repeat domain-containing protein 11"/>
    <property type="match status" value="1"/>
</dbReference>
<dbReference type="Gene3D" id="1.25.40.20">
    <property type="entry name" value="Ankyrin repeat-containing domain"/>
    <property type="match status" value="1"/>
</dbReference>
<dbReference type="InterPro" id="IPR042636">
    <property type="entry name" value="ANKRD11"/>
</dbReference>
<dbReference type="InterPro" id="IPR002110">
    <property type="entry name" value="Ankyrin_rpt"/>
</dbReference>
<dbReference type="InterPro" id="IPR036770">
    <property type="entry name" value="Ankyrin_rpt-contain_sf"/>
</dbReference>
<dbReference type="PANTHER" id="PTHR24145">
    <property type="entry name" value="ANKYRIN REPEAT DOMAIN-CONTAINING PROTEIN 11"/>
    <property type="match status" value="1"/>
</dbReference>
<dbReference type="PANTHER" id="PTHR24145:SF3">
    <property type="entry name" value="ANKYRIN REPEAT DOMAIN-CONTAINING PROTEIN 11"/>
    <property type="match status" value="1"/>
</dbReference>
<dbReference type="Pfam" id="PF12796">
    <property type="entry name" value="Ank_2"/>
    <property type="match status" value="2"/>
</dbReference>
<dbReference type="SMART" id="SM00248">
    <property type="entry name" value="ANK"/>
    <property type="match status" value="3"/>
</dbReference>
<dbReference type="SUPFAM" id="SSF48403">
    <property type="entry name" value="Ankyrin repeat"/>
    <property type="match status" value="1"/>
</dbReference>
<dbReference type="PROSITE" id="PS50297">
    <property type="entry name" value="ANK_REP_REGION"/>
    <property type="match status" value="1"/>
</dbReference>
<dbReference type="PROSITE" id="PS50088">
    <property type="entry name" value="ANK_REPEAT"/>
    <property type="match status" value="3"/>
</dbReference>
<evidence type="ECO:0000250" key="1">
    <source>
        <dbReference type="UniProtKB" id="E9Q4F7"/>
    </source>
</evidence>
<evidence type="ECO:0000256" key="2">
    <source>
        <dbReference type="SAM" id="MobiDB-lite"/>
    </source>
</evidence>
<evidence type="ECO:0000269" key="3">
    <source>
    </source>
</evidence>
<evidence type="ECO:0000269" key="4">
    <source>
    </source>
</evidence>
<evidence type="ECO:0000269" key="5">
    <source>
    </source>
</evidence>
<evidence type="ECO:0000269" key="6">
    <source>
    </source>
</evidence>
<evidence type="ECO:0000269" key="7">
    <source ref="1"/>
</evidence>
<evidence type="ECO:0000305" key="8"/>
<evidence type="ECO:0007744" key="9">
    <source>
    </source>
</evidence>
<evidence type="ECO:0007744" key="10">
    <source>
    </source>
</evidence>
<evidence type="ECO:0007744" key="11">
    <source>
    </source>
</evidence>
<evidence type="ECO:0007744" key="12">
    <source>
    </source>
</evidence>
<evidence type="ECO:0007744" key="13">
    <source>
    </source>
</evidence>
<evidence type="ECO:0007744" key="14">
    <source>
    </source>
</evidence>
<name>ANR11_HUMAN</name>